<comment type="function">
    <text evidence="1">May play a role in DNA repair. It seems to be involved in an RecBC-independent recombinational process of DNA repair. It may act with RecF and RecO.</text>
</comment>
<comment type="similarity">
    <text evidence="1">Belongs to the RecR family.</text>
</comment>
<accession>B0BXK8</accession>
<feature type="chain" id="PRO_1000074127" description="Recombination protein RecR">
    <location>
        <begin position="1"/>
        <end position="201"/>
    </location>
</feature>
<feature type="domain" description="Toprim" evidence="1">
    <location>
        <begin position="82"/>
        <end position="177"/>
    </location>
</feature>
<feature type="zinc finger region" description="C4-type" evidence="1">
    <location>
        <begin position="59"/>
        <end position="74"/>
    </location>
</feature>
<proteinExistence type="inferred from homology"/>
<protein>
    <recommendedName>
        <fullName evidence="1">Recombination protein RecR</fullName>
    </recommendedName>
</protein>
<evidence type="ECO:0000255" key="1">
    <source>
        <dbReference type="HAMAP-Rule" id="MF_00017"/>
    </source>
</evidence>
<keyword id="KW-0227">DNA damage</keyword>
<keyword id="KW-0233">DNA recombination</keyword>
<keyword id="KW-0234">DNA repair</keyword>
<keyword id="KW-0479">Metal-binding</keyword>
<keyword id="KW-0862">Zinc</keyword>
<keyword id="KW-0863">Zinc-finger</keyword>
<gene>
    <name evidence="1" type="primary">recR</name>
    <name type="ordered locus">RrIowa_0726</name>
</gene>
<reference key="1">
    <citation type="journal article" date="2008" name="Infect. Immun.">
        <title>Genomic comparison of virulent Rickettsia rickettsii Sheila Smith and avirulent Rickettsia rickettsii Iowa.</title>
        <authorList>
            <person name="Ellison D.W."/>
            <person name="Clark T.R."/>
            <person name="Sturdevant D.E."/>
            <person name="Virtaneva K."/>
            <person name="Porcella S.F."/>
            <person name="Hackstadt T."/>
        </authorList>
    </citation>
    <scope>NUCLEOTIDE SEQUENCE [LARGE SCALE GENOMIC DNA]</scope>
    <source>
        <strain>Iowa</strain>
    </source>
</reference>
<organism>
    <name type="scientific">Rickettsia rickettsii (strain Iowa)</name>
    <dbReference type="NCBI Taxonomy" id="452659"/>
    <lineage>
        <taxon>Bacteria</taxon>
        <taxon>Pseudomonadati</taxon>
        <taxon>Pseudomonadota</taxon>
        <taxon>Alphaproteobacteria</taxon>
        <taxon>Rickettsiales</taxon>
        <taxon>Rickettsiaceae</taxon>
        <taxon>Rickettsieae</taxon>
        <taxon>Rickettsia</taxon>
        <taxon>spotted fever group</taxon>
    </lineage>
</organism>
<dbReference type="EMBL" id="CP000766">
    <property type="protein sequence ID" value="ABY72584.1"/>
    <property type="molecule type" value="Genomic_DNA"/>
</dbReference>
<dbReference type="RefSeq" id="WP_012150801.1">
    <property type="nucleotide sequence ID" value="NC_010263.3"/>
</dbReference>
<dbReference type="SMR" id="B0BXK8"/>
<dbReference type="GeneID" id="79937353"/>
<dbReference type="KEGG" id="rrj:RrIowa_0726"/>
<dbReference type="eggNOG" id="COG0353">
    <property type="taxonomic scope" value="Bacteria"/>
</dbReference>
<dbReference type="HOGENOM" id="CLU_060739_1_1_5"/>
<dbReference type="Proteomes" id="UP000000796">
    <property type="component" value="Chromosome"/>
</dbReference>
<dbReference type="GO" id="GO:0003677">
    <property type="term" value="F:DNA binding"/>
    <property type="evidence" value="ECO:0007669"/>
    <property type="project" value="UniProtKB-UniRule"/>
</dbReference>
<dbReference type="GO" id="GO:0008270">
    <property type="term" value="F:zinc ion binding"/>
    <property type="evidence" value="ECO:0007669"/>
    <property type="project" value="UniProtKB-KW"/>
</dbReference>
<dbReference type="GO" id="GO:0006310">
    <property type="term" value="P:DNA recombination"/>
    <property type="evidence" value="ECO:0007669"/>
    <property type="project" value="UniProtKB-UniRule"/>
</dbReference>
<dbReference type="GO" id="GO:0006281">
    <property type="term" value="P:DNA repair"/>
    <property type="evidence" value="ECO:0007669"/>
    <property type="project" value="UniProtKB-UniRule"/>
</dbReference>
<dbReference type="CDD" id="cd01025">
    <property type="entry name" value="TOPRIM_recR"/>
    <property type="match status" value="1"/>
</dbReference>
<dbReference type="Gene3D" id="3.40.1360.10">
    <property type="match status" value="1"/>
</dbReference>
<dbReference type="Gene3D" id="1.10.8.420">
    <property type="entry name" value="RecR Domain 1"/>
    <property type="match status" value="1"/>
</dbReference>
<dbReference type="HAMAP" id="MF_00017">
    <property type="entry name" value="RecR"/>
    <property type="match status" value="1"/>
</dbReference>
<dbReference type="InterPro" id="IPR000093">
    <property type="entry name" value="DNA_Rcmb_RecR"/>
</dbReference>
<dbReference type="InterPro" id="IPR023627">
    <property type="entry name" value="Rcmb_RecR"/>
</dbReference>
<dbReference type="InterPro" id="IPR015967">
    <property type="entry name" value="Rcmb_RecR_Znf"/>
</dbReference>
<dbReference type="InterPro" id="IPR006171">
    <property type="entry name" value="TOPRIM_dom"/>
</dbReference>
<dbReference type="InterPro" id="IPR034137">
    <property type="entry name" value="TOPRIM_RecR"/>
</dbReference>
<dbReference type="NCBIfam" id="TIGR00615">
    <property type="entry name" value="recR"/>
    <property type="match status" value="1"/>
</dbReference>
<dbReference type="PANTHER" id="PTHR30446">
    <property type="entry name" value="RECOMBINATION PROTEIN RECR"/>
    <property type="match status" value="1"/>
</dbReference>
<dbReference type="PANTHER" id="PTHR30446:SF0">
    <property type="entry name" value="RECOMBINATION PROTEIN RECR"/>
    <property type="match status" value="1"/>
</dbReference>
<dbReference type="Pfam" id="PF21175">
    <property type="entry name" value="RecR_C"/>
    <property type="match status" value="1"/>
</dbReference>
<dbReference type="Pfam" id="PF21176">
    <property type="entry name" value="RecR_HhH"/>
    <property type="match status" value="1"/>
</dbReference>
<dbReference type="Pfam" id="PF02132">
    <property type="entry name" value="RecR_ZnF"/>
    <property type="match status" value="1"/>
</dbReference>
<dbReference type="Pfam" id="PF13662">
    <property type="entry name" value="Toprim_4"/>
    <property type="match status" value="1"/>
</dbReference>
<dbReference type="SMART" id="SM00493">
    <property type="entry name" value="TOPRIM"/>
    <property type="match status" value="1"/>
</dbReference>
<dbReference type="SUPFAM" id="SSF111304">
    <property type="entry name" value="Recombination protein RecR"/>
    <property type="match status" value="1"/>
</dbReference>
<dbReference type="PROSITE" id="PS01300">
    <property type="entry name" value="RECR"/>
    <property type="match status" value="1"/>
</dbReference>
<dbReference type="PROSITE" id="PS50880">
    <property type="entry name" value="TOPRIM"/>
    <property type="match status" value="1"/>
</dbReference>
<sequence>MNETNYNDIDQLIYLFSKLPGLGIRSARRIALYLLQDKDVRLKSLINNLVEIDKKIVKCEICGNMDTENICRICSSEYRDKSIIAIVETVAELWAMERSGNFKGLYHVLGHNLSAASRQNPSILRLPELLTRCFAENIKEVIIATNSTLEGQTTAYFITEYLKEHPAKISRLASGIPIGGELDYLDEGTVSAAINLRQPFE</sequence>
<name>RECR_RICRO</name>